<feature type="chain" id="PRO_0000457122" description="SRRM2 protein homolog rsr-2">
    <location>
        <begin position="1"/>
        <end position="425"/>
    </location>
</feature>
<feature type="domain" description="CWF21" evidence="2">
    <location>
        <begin position="57"/>
        <end position="100"/>
    </location>
</feature>
<feature type="region of interest" description="Disordered" evidence="3">
    <location>
        <begin position="109"/>
        <end position="131"/>
    </location>
</feature>
<feature type="region of interest" description="Disordered" evidence="3">
    <location>
        <begin position="161"/>
        <end position="425"/>
    </location>
</feature>
<feature type="compositionally biased region" description="Basic and acidic residues" evidence="3">
    <location>
        <begin position="164"/>
        <end position="178"/>
    </location>
</feature>
<feature type="compositionally biased region" description="Low complexity" evidence="3">
    <location>
        <begin position="189"/>
        <end position="202"/>
    </location>
</feature>
<feature type="compositionally biased region" description="Basic residues" evidence="3">
    <location>
        <begin position="210"/>
        <end position="221"/>
    </location>
</feature>
<feature type="compositionally biased region" description="Basic and acidic residues" evidence="3">
    <location>
        <begin position="222"/>
        <end position="251"/>
    </location>
</feature>
<feature type="compositionally biased region" description="Basic and acidic residues" evidence="3">
    <location>
        <begin position="259"/>
        <end position="305"/>
    </location>
</feature>
<feature type="compositionally biased region" description="Basic residues" evidence="3">
    <location>
        <begin position="306"/>
        <end position="317"/>
    </location>
</feature>
<feature type="compositionally biased region" description="Basic and acidic residues" evidence="3">
    <location>
        <begin position="321"/>
        <end position="332"/>
    </location>
</feature>
<feature type="compositionally biased region" description="Basic and acidic residues" evidence="3">
    <location>
        <begin position="355"/>
        <end position="366"/>
    </location>
</feature>
<feature type="compositionally biased region" description="Basic and acidic residues" evidence="3">
    <location>
        <begin position="383"/>
        <end position="398"/>
    </location>
</feature>
<feature type="compositionally biased region" description="Low complexity" evidence="3">
    <location>
        <begin position="399"/>
        <end position="425"/>
    </location>
</feature>
<protein>
    <recommendedName>
        <fullName evidence="5">SRRM2 protein homolog rsr-2</fullName>
    </recommendedName>
    <alternativeName>
        <fullName evidence="8">SR protein-related rsr-2</fullName>
    </alternativeName>
</protein>
<proteinExistence type="evidence at protein level"/>
<evidence type="ECO:0000250" key="1">
    <source>
        <dbReference type="UniProtKB" id="Q9UQ35"/>
    </source>
</evidence>
<evidence type="ECO:0000255" key="2"/>
<evidence type="ECO:0000256" key="3">
    <source>
        <dbReference type="SAM" id="MobiDB-lite"/>
    </source>
</evidence>
<evidence type="ECO:0000269" key="4">
    <source>
    </source>
</evidence>
<evidence type="ECO:0000303" key="5">
    <source>
    </source>
</evidence>
<evidence type="ECO:0000305" key="6"/>
<evidence type="ECO:0000312" key="7">
    <source>
        <dbReference type="Proteomes" id="UP000001940"/>
    </source>
</evidence>
<evidence type="ECO:0000312" key="8">
    <source>
        <dbReference type="WormBase" id="Y57A10A.19"/>
    </source>
</evidence>
<keyword id="KW-0158">Chromosome</keyword>
<keyword id="KW-0507">mRNA processing</keyword>
<keyword id="KW-0508">mRNA splicing</keyword>
<keyword id="KW-0539">Nucleus</keyword>
<keyword id="KW-1185">Reference proteome</keyword>
<keyword id="KW-0747">Spliceosome</keyword>
<keyword id="KW-0804">Transcription</keyword>
<keyword id="KW-0805">Transcription regulation</keyword>
<sequence length="425" mass="49462">MYNGIGLQTARGSGTNGYVQSNLSHLMQARRKIEYNGEDDLRKMEAELNRKPNEEIMDHNRKRQIEVKCTEFEMLLEDKGLDDEDIERKVGEYRKNLLKQLESGELNVDEELSTKESHARRRAAANNRDKMRNALGLGEDYVPGSSMAKMNKSDVVGAAMESELPQKDDKEKLLETLRLHRKSKKKQESSSSSSSSSSSSESSSEDEKHRKDRKKKEKKQKLKEMEKRREKLRQKERELLAVSDKVKKEEPAESSDEEDSRKDQRKPREDRRRSVERQDQREDRRDRRRSPEDPRERRRSPEDRTVRRRSPERRRQQRSPSVERRKSPQRRDERRRRHDSSENERRSTATASKKSRMDELEVKQEPPSDSEDYIAKTNLAPIRVEKSAEKVEKSRKSSSESSSGSSDSDSSSDSSSSSDSSSDSE</sequence>
<reference evidence="7" key="1">
    <citation type="journal article" date="1998" name="Science">
        <title>Genome sequence of the nematode C. elegans: a platform for investigating biology.</title>
        <authorList>
            <consortium name="The C. elegans sequencing consortium"/>
        </authorList>
    </citation>
    <scope>NUCLEOTIDE SEQUENCE [LARGE SCALE GENOMIC DNA]</scope>
    <source>
        <strain evidence="7">Bristol N2</strain>
    </source>
</reference>
<reference evidence="6" key="2">
    <citation type="journal article" date="2013" name="PLoS Genet.">
        <title>RSR-2, the Caenorhabditis elegans ortholog of human spliceosomal component SRm300/SRRM2, regulates development by influencing the transcriptional machinery.</title>
        <authorList>
            <person name="Fontrodona L."/>
            <person name="Porta-de-la-Riva M."/>
            <person name="Moran T."/>
            <person name="Niu W."/>
            <person name="Diaz M."/>
            <person name="Aristizabal-Corrales D."/>
            <person name="Villanueva A."/>
            <person name="Schwartz S. Jr."/>
            <person name="Reinke V."/>
            <person name="Ceron J."/>
        </authorList>
    </citation>
    <scope>FUNCTION</scope>
    <scope>INTERACTION WITH AMA-1; PRP-19 AND PRP-8</scope>
    <scope>SUBCELLULAR LOCATION</scope>
    <scope>TISSUE SPECIFICITY</scope>
    <scope>DISRUPTION PHENOTYPE</scope>
</reference>
<name>SRRMH_CAEEL</name>
<accession>Q9U213</accession>
<gene>
    <name evidence="8" type="primary">rsr-2</name>
    <name evidence="8" type="ORF">Y57A10A.19</name>
</gene>
<organism evidence="7">
    <name type="scientific">Caenorhabditis elegans</name>
    <dbReference type="NCBI Taxonomy" id="6239"/>
    <lineage>
        <taxon>Eukaryota</taxon>
        <taxon>Metazoa</taxon>
        <taxon>Ecdysozoa</taxon>
        <taxon>Nematoda</taxon>
        <taxon>Chromadorea</taxon>
        <taxon>Rhabditida</taxon>
        <taxon>Rhabditina</taxon>
        <taxon>Rhabditomorpha</taxon>
        <taxon>Rhabditoidea</taxon>
        <taxon>Rhabditidae</taxon>
        <taxon>Peloderinae</taxon>
        <taxon>Caenorhabditis</taxon>
    </lineage>
</organism>
<comment type="function">
    <text evidence="1 4">Plays a role in pre-mRNA splicing as component of the spliceosome (By similarity). Involved in modulating global transcription, probably acting via interaction with RNA polymerase II (PubMed:23754964). Influences the chromatin distribution and phosphorylation state of RNA polymerase II subunit ama-1 (PubMed:23754964). Involved in regulating the germline sex determination pathway (PubMed:23754964).</text>
</comment>
<comment type="subunit">
    <text evidence="4">Interacts with RNA polymerase II subunit ama-1, binding to both hyperphosphorylated and hypophosphorylated forms, but more strongly when ama-1 is phosphorylated at 'Ser-5' of the C-terminal heptapeptide repeat (PubMed:23754964). Interacts with pre-mRNA-processing factor prp-19 (PubMed:23754964). May also interact with pre-mRNA-splicing factor 8 homolog prp-8 (PubMed:23754964).</text>
</comment>
<comment type="subcellular location">
    <subcellularLocation>
        <location evidence="4">Nucleus</location>
    </subcellularLocation>
    <subcellularLocation>
        <location evidence="4">Chromosome</location>
    </subcellularLocation>
    <subcellularLocation>
        <location evidence="4">Nucleus</location>
        <location evidence="4">Nuclear body</location>
    </subcellularLocation>
    <text evidence="4">Localized to nuclear chromatin (at protein level) (PubMed:23754964). Localization along chromatin is similar to that for RNA polymerase II subunit ama-1 (PubMed:23754964).</text>
</comment>
<comment type="tissue specificity">
    <text evidence="4">Expressed in the proximal germline, but not in the most distal part where mitosis takes place (PubMed:23754964). May be expressed ubiquitously in somatic cells (PubMed:23754964).</text>
</comment>
<comment type="disruption phenotype">
    <text evidence="4">RNAi-mediated knockdown has minimal effects on development and worms reach adulthood, but are sterile (PubMed:23754964). Sterility is primarily caused by a defect in the sperm/oocyte switch producing hermaphrodites without oocytes and with more sperm (PubMed:23754964). Slightly lower global transcript levels, while constitutive splicing remains unaltered, in larval stages L3 and L4 (PubMed:23754964). Modifies the distribution of RNA polymerase II subunit ama-1 along chromatin (PubMed:23754964). Significant overlap (q&lt;0.05) in the transcripts down-regulated by knockdown of pre-mRNA-splicing factor 8 homolog prp-8 (PubMed:23754964). In a gld-3 mutant background, produces sperm displaying a masculinization of germline phenotype (PubMed:23754964). In a fog-1 mutant background, only develops oocytes (PubMed:23754964).</text>
</comment>
<comment type="similarity">
    <text evidence="6">Belongs to the CWC21 family.</text>
</comment>
<dbReference type="EMBL" id="BX284602">
    <property type="protein sequence ID" value="CAB60765.1"/>
    <property type="molecule type" value="Genomic_DNA"/>
</dbReference>
<dbReference type="RefSeq" id="NP_001370093.1">
    <property type="nucleotide sequence ID" value="NM_001383969.2"/>
</dbReference>
<dbReference type="RefSeq" id="NP_496595.1">
    <property type="nucleotide sequence ID" value="NM_064194.1"/>
</dbReference>
<dbReference type="SMR" id="Q9U213"/>
<dbReference type="FunCoup" id="Q9U213">
    <property type="interactions" value="381"/>
</dbReference>
<dbReference type="STRING" id="6239.Y57A10A.19.1"/>
<dbReference type="PaxDb" id="6239-Y57A10A.19"/>
<dbReference type="PeptideAtlas" id="Q9U213"/>
<dbReference type="EnsemblMetazoa" id="Y57A10A.19.1">
    <property type="protein sequence ID" value="Y57A10A.19.1"/>
    <property type="gene ID" value="WBGene00013260"/>
</dbReference>
<dbReference type="GeneID" id="174862"/>
<dbReference type="UCSC" id="Y57A10A.19">
    <property type="organism name" value="c. elegans"/>
</dbReference>
<dbReference type="AGR" id="WB:WBGene00013260"/>
<dbReference type="WormBase" id="Y57A10A.19">
    <property type="protein sequence ID" value="CE25503"/>
    <property type="gene ID" value="WBGene00013260"/>
    <property type="gene designation" value="rsr-2"/>
</dbReference>
<dbReference type="eggNOG" id="KOG1869">
    <property type="taxonomic scope" value="Eukaryota"/>
</dbReference>
<dbReference type="GeneTree" id="ENSGT00940000167070"/>
<dbReference type="HOGENOM" id="CLU_546588_0_0_1"/>
<dbReference type="InParanoid" id="Q9U213"/>
<dbReference type="OMA" id="KCTEFEM"/>
<dbReference type="OrthoDB" id="10267305at2759"/>
<dbReference type="PRO" id="PR:Q9U213"/>
<dbReference type="Proteomes" id="UP000001940">
    <property type="component" value="Chromosome II"/>
</dbReference>
<dbReference type="Bgee" id="WBGene00013260">
    <property type="expression patterns" value="Expressed in embryo and 5 other cell types or tissues"/>
</dbReference>
<dbReference type="GO" id="GO:0000785">
    <property type="term" value="C:chromatin"/>
    <property type="evidence" value="ECO:0000314"/>
    <property type="project" value="WormBase"/>
</dbReference>
<dbReference type="GO" id="GO:0016607">
    <property type="term" value="C:nuclear speck"/>
    <property type="evidence" value="ECO:0000314"/>
    <property type="project" value="WormBase"/>
</dbReference>
<dbReference type="GO" id="GO:0005681">
    <property type="term" value="C:spliceosomal complex"/>
    <property type="evidence" value="ECO:0007669"/>
    <property type="project" value="UniProtKB-KW"/>
</dbReference>
<dbReference type="GO" id="GO:0006397">
    <property type="term" value="P:mRNA processing"/>
    <property type="evidence" value="ECO:0007669"/>
    <property type="project" value="UniProtKB-KW"/>
</dbReference>
<dbReference type="GO" id="GO:0008380">
    <property type="term" value="P:RNA splicing"/>
    <property type="evidence" value="ECO:0007669"/>
    <property type="project" value="UniProtKB-KW"/>
</dbReference>
<dbReference type="CDD" id="cd21373">
    <property type="entry name" value="cwf21_SRRM2-like"/>
    <property type="match status" value="1"/>
</dbReference>
<dbReference type="Gene3D" id="6.10.140.420">
    <property type="match status" value="1"/>
</dbReference>
<dbReference type="InterPro" id="IPR051372">
    <property type="entry name" value="CWC21"/>
</dbReference>
<dbReference type="InterPro" id="IPR013170">
    <property type="entry name" value="mRNA_splic_Cwf21_dom"/>
</dbReference>
<dbReference type="PANTHER" id="PTHR36562">
    <property type="entry name" value="SERINE/ARGININE REPETITIVE MATRIX 2"/>
    <property type="match status" value="1"/>
</dbReference>
<dbReference type="PANTHER" id="PTHR36562:SF5">
    <property type="entry name" value="SERINE_ARGININE REPETITIVE MATRIX 2"/>
    <property type="match status" value="1"/>
</dbReference>
<dbReference type="Pfam" id="PF08312">
    <property type="entry name" value="cwf21"/>
    <property type="match status" value="1"/>
</dbReference>
<dbReference type="SMART" id="SM01115">
    <property type="entry name" value="cwf21"/>
    <property type="match status" value="1"/>
</dbReference>